<evidence type="ECO:0000255" key="1">
    <source>
        <dbReference type="HAMAP-Rule" id="MF_00624"/>
    </source>
</evidence>
<feature type="chain" id="PRO_1000051572" description="Glucose-1-phosphate adenylyltransferase">
    <location>
        <begin position="1"/>
        <end position="380"/>
    </location>
</feature>
<feature type="binding site" evidence="1">
    <location>
        <position position="164"/>
    </location>
    <ligand>
        <name>alpha-D-glucose 1-phosphate</name>
        <dbReference type="ChEBI" id="CHEBI:58601"/>
    </ligand>
</feature>
<feature type="binding site" evidence="1">
    <location>
        <begin position="179"/>
        <end position="180"/>
    </location>
    <ligand>
        <name>alpha-D-glucose 1-phosphate</name>
        <dbReference type="ChEBI" id="CHEBI:58601"/>
    </ligand>
</feature>
<feature type="binding site" evidence="1">
    <location>
        <position position="190"/>
    </location>
    <ligand>
        <name>alpha-D-glucose 1-phosphate</name>
        <dbReference type="ChEBI" id="CHEBI:58601"/>
    </ligand>
</feature>
<keyword id="KW-0067">ATP-binding</keyword>
<keyword id="KW-0119">Carbohydrate metabolism</keyword>
<keyword id="KW-0320">Glycogen biosynthesis</keyword>
<keyword id="KW-0321">Glycogen metabolism</keyword>
<keyword id="KW-0547">Nucleotide-binding</keyword>
<keyword id="KW-0548">Nucleotidyltransferase</keyword>
<keyword id="KW-0808">Transferase</keyword>
<sequence length="380" mass="42200">MAIEMLGLILAGGQGTRLGKLTKDVAKPAVPFGGRYRIIDFALSNCANSNVKNVGVITQYQPLTLNAHIGNGAPWGLNGINRGVTILQPYFSQEGSKWFEGTSHAVYQNISYIDQQNPEYVLILSGDHIYKMDYEAMLESHKEREASLTVSVMEVPLEEASRFGIMNTDDNDRIIEFEEKPKEPKSNLASMGIYIFNWKRLREVLVNGYSKGNPMEDFGGDVIPAYIEAGENVFAYRFKGYWKDVGTIDSLHQSSMEFLDLNNELNITDKSWRIYSHNDISAPQFITEKSKVKNALVGDGCYVDGTVIHSILSQNVHVQEGTTIEDSFIMSGTFIGENVTIKNAIIGENAKIGDNVEIIGEDEVAVIGHGEIKGENKNEQ</sequence>
<gene>
    <name evidence="1" type="primary">glgC</name>
    <name type="ordered locus">llmg_1874</name>
</gene>
<proteinExistence type="inferred from homology"/>
<comment type="function">
    <text evidence="1">Involved in the biosynthesis of ADP-glucose, a building block required for the elongation reactions to produce glycogen. Catalyzes the reaction between ATP and alpha-D-glucose 1-phosphate (G1P) to produce pyrophosphate and ADP-Glc.</text>
</comment>
<comment type="catalytic activity">
    <reaction evidence="1">
        <text>alpha-D-glucose 1-phosphate + ATP + H(+) = ADP-alpha-D-glucose + diphosphate</text>
        <dbReference type="Rhea" id="RHEA:12120"/>
        <dbReference type="ChEBI" id="CHEBI:15378"/>
        <dbReference type="ChEBI" id="CHEBI:30616"/>
        <dbReference type="ChEBI" id="CHEBI:33019"/>
        <dbReference type="ChEBI" id="CHEBI:57498"/>
        <dbReference type="ChEBI" id="CHEBI:58601"/>
        <dbReference type="EC" id="2.7.7.27"/>
    </reaction>
</comment>
<comment type="pathway">
    <text evidence="1">Glycan biosynthesis; glycogen biosynthesis.</text>
</comment>
<comment type="subunit">
    <text evidence="1">Homotetramer.</text>
</comment>
<comment type="similarity">
    <text evidence="1">Belongs to the bacterial/plant glucose-1-phosphate adenylyltransferase family.</text>
</comment>
<name>GLGC_LACLM</name>
<dbReference type="EC" id="2.7.7.27" evidence="1"/>
<dbReference type="EMBL" id="AM406671">
    <property type="protein sequence ID" value="CAL98444.1"/>
    <property type="molecule type" value="Genomic_DNA"/>
</dbReference>
<dbReference type="RefSeq" id="WP_011835638.1">
    <property type="nucleotide sequence ID" value="NC_009004.1"/>
</dbReference>
<dbReference type="SMR" id="A2RMB7"/>
<dbReference type="STRING" id="416870.llmg_1874"/>
<dbReference type="KEGG" id="llm:llmg_1874"/>
<dbReference type="eggNOG" id="COG0448">
    <property type="taxonomic scope" value="Bacteria"/>
</dbReference>
<dbReference type="HOGENOM" id="CLU_029499_14_0_9"/>
<dbReference type="OrthoDB" id="9801810at2"/>
<dbReference type="PhylomeDB" id="A2RMB7"/>
<dbReference type="UniPathway" id="UPA00164"/>
<dbReference type="Proteomes" id="UP000000364">
    <property type="component" value="Chromosome"/>
</dbReference>
<dbReference type="GO" id="GO:0005524">
    <property type="term" value="F:ATP binding"/>
    <property type="evidence" value="ECO:0007669"/>
    <property type="project" value="UniProtKB-KW"/>
</dbReference>
<dbReference type="GO" id="GO:0008878">
    <property type="term" value="F:glucose-1-phosphate adenylyltransferase activity"/>
    <property type="evidence" value="ECO:0007669"/>
    <property type="project" value="UniProtKB-UniRule"/>
</dbReference>
<dbReference type="GO" id="GO:0005978">
    <property type="term" value="P:glycogen biosynthetic process"/>
    <property type="evidence" value="ECO:0007669"/>
    <property type="project" value="UniProtKB-UniRule"/>
</dbReference>
<dbReference type="CDD" id="cd02508">
    <property type="entry name" value="ADP_Glucose_PP"/>
    <property type="match status" value="1"/>
</dbReference>
<dbReference type="CDD" id="cd04651">
    <property type="entry name" value="LbH_G1P_AT_C"/>
    <property type="match status" value="1"/>
</dbReference>
<dbReference type="Gene3D" id="2.160.10.10">
    <property type="entry name" value="Hexapeptide repeat proteins"/>
    <property type="match status" value="1"/>
</dbReference>
<dbReference type="Gene3D" id="3.90.550.10">
    <property type="entry name" value="Spore Coat Polysaccharide Biosynthesis Protein SpsA, Chain A"/>
    <property type="match status" value="1"/>
</dbReference>
<dbReference type="HAMAP" id="MF_00624">
    <property type="entry name" value="GlgC"/>
    <property type="match status" value="1"/>
</dbReference>
<dbReference type="InterPro" id="IPR011831">
    <property type="entry name" value="ADP-Glc_PPase"/>
</dbReference>
<dbReference type="InterPro" id="IPR005836">
    <property type="entry name" value="ADP_Glu_pyroP_CS"/>
</dbReference>
<dbReference type="InterPro" id="IPR023049">
    <property type="entry name" value="GlgC_bac"/>
</dbReference>
<dbReference type="InterPro" id="IPR056818">
    <property type="entry name" value="GlmU/GlgC-like_hexapep"/>
</dbReference>
<dbReference type="InterPro" id="IPR005835">
    <property type="entry name" value="NTP_transferase_dom"/>
</dbReference>
<dbReference type="InterPro" id="IPR029044">
    <property type="entry name" value="Nucleotide-diphossugar_trans"/>
</dbReference>
<dbReference type="InterPro" id="IPR011004">
    <property type="entry name" value="Trimer_LpxA-like_sf"/>
</dbReference>
<dbReference type="NCBIfam" id="TIGR02091">
    <property type="entry name" value="glgC"/>
    <property type="match status" value="1"/>
</dbReference>
<dbReference type="NCBIfam" id="NF003670">
    <property type="entry name" value="PRK05293.1"/>
    <property type="match status" value="1"/>
</dbReference>
<dbReference type="PANTHER" id="PTHR43523:SF2">
    <property type="entry name" value="GLUCOSE-1-PHOSPHATE ADENYLYLTRANSFERASE"/>
    <property type="match status" value="1"/>
</dbReference>
<dbReference type="PANTHER" id="PTHR43523">
    <property type="entry name" value="GLUCOSE-1-PHOSPHATE ADENYLYLTRANSFERASE-RELATED"/>
    <property type="match status" value="1"/>
</dbReference>
<dbReference type="Pfam" id="PF24894">
    <property type="entry name" value="Hexapep_GlmU"/>
    <property type="match status" value="1"/>
</dbReference>
<dbReference type="Pfam" id="PF00483">
    <property type="entry name" value="NTP_transferase"/>
    <property type="match status" value="1"/>
</dbReference>
<dbReference type="SUPFAM" id="SSF53448">
    <property type="entry name" value="Nucleotide-diphospho-sugar transferases"/>
    <property type="match status" value="1"/>
</dbReference>
<dbReference type="SUPFAM" id="SSF51161">
    <property type="entry name" value="Trimeric LpxA-like enzymes"/>
    <property type="match status" value="1"/>
</dbReference>
<dbReference type="PROSITE" id="PS00808">
    <property type="entry name" value="ADP_GLC_PYROPHOSPH_1"/>
    <property type="match status" value="1"/>
</dbReference>
<dbReference type="PROSITE" id="PS00809">
    <property type="entry name" value="ADP_GLC_PYROPHOSPH_2"/>
    <property type="match status" value="1"/>
</dbReference>
<dbReference type="PROSITE" id="PS00810">
    <property type="entry name" value="ADP_GLC_PYROPHOSPH_3"/>
    <property type="match status" value="1"/>
</dbReference>
<reference key="1">
    <citation type="journal article" date="2007" name="J. Bacteriol.">
        <title>The complete genome sequence of the lactic acid bacterial paradigm Lactococcus lactis subsp. cremoris MG1363.</title>
        <authorList>
            <person name="Wegmann U."/>
            <person name="O'Connell-Motherway M."/>
            <person name="Zomer A."/>
            <person name="Buist G."/>
            <person name="Shearman C."/>
            <person name="Canchaya C."/>
            <person name="Ventura M."/>
            <person name="Goesmann A."/>
            <person name="Gasson M.J."/>
            <person name="Kuipers O.P."/>
            <person name="van Sinderen D."/>
            <person name="Kok J."/>
        </authorList>
    </citation>
    <scope>NUCLEOTIDE SEQUENCE [LARGE SCALE GENOMIC DNA]</scope>
    <source>
        <strain>MG1363</strain>
    </source>
</reference>
<protein>
    <recommendedName>
        <fullName evidence="1">Glucose-1-phosphate adenylyltransferase</fullName>
        <ecNumber evidence="1">2.7.7.27</ecNumber>
    </recommendedName>
    <alternativeName>
        <fullName evidence="1">ADP-glucose pyrophosphorylase</fullName>
        <shortName evidence="1">ADPGlc PPase</shortName>
    </alternativeName>
    <alternativeName>
        <fullName evidence="1">ADP-glucose synthase</fullName>
    </alternativeName>
</protein>
<organism>
    <name type="scientific">Lactococcus lactis subsp. cremoris (strain MG1363)</name>
    <dbReference type="NCBI Taxonomy" id="416870"/>
    <lineage>
        <taxon>Bacteria</taxon>
        <taxon>Bacillati</taxon>
        <taxon>Bacillota</taxon>
        <taxon>Bacilli</taxon>
        <taxon>Lactobacillales</taxon>
        <taxon>Streptococcaceae</taxon>
        <taxon>Lactococcus</taxon>
        <taxon>Lactococcus cremoris subsp. cremoris</taxon>
    </lineage>
</organism>
<accession>A2RMB7</accession>